<keyword id="KW-0256">Endoplasmic reticulum</keyword>
<keyword id="KW-0333">Golgi apparatus</keyword>
<keyword id="KW-0472">Membrane</keyword>
<keyword id="KW-1185">Reference proteome</keyword>
<keyword id="KW-0732">Signal</keyword>
<keyword id="KW-0812">Transmembrane</keyword>
<keyword id="KW-1133">Transmembrane helix</keyword>
<dbReference type="EMBL" id="CU329672">
    <property type="protein sequence ID" value="CAA20131.1"/>
    <property type="molecule type" value="Genomic_DNA"/>
</dbReference>
<dbReference type="PIR" id="T41176">
    <property type="entry name" value="T41176"/>
</dbReference>
<dbReference type="BioGRID" id="275921">
    <property type="interactions" value="8"/>
</dbReference>
<dbReference type="FunCoup" id="O74481">
    <property type="interactions" value="96"/>
</dbReference>
<dbReference type="STRING" id="284812.O74481"/>
<dbReference type="PaxDb" id="4896-SPCC1840.08c.1"/>
<dbReference type="EnsemblFungi" id="SPCC1840.08c.1">
    <property type="protein sequence ID" value="SPCC1840.08c.1:pep"/>
    <property type="gene ID" value="SPCC1840.08c"/>
</dbReference>
<dbReference type="KEGG" id="spo:2539355"/>
<dbReference type="PomBase" id="SPCC1840.08c"/>
<dbReference type="VEuPathDB" id="FungiDB:SPCC1840.08c"/>
<dbReference type="eggNOG" id="KOG0191">
    <property type="taxonomic scope" value="Eukaryota"/>
</dbReference>
<dbReference type="HOGENOM" id="CLU_485840_0_0_1"/>
<dbReference type="InParanoid" id="O74481"/>
<dbReference type="OMA" id="YAPIFRS"/>
<dbReference type="PhylomeDB" id="O74481"/>
<dbReference type="PRO" id="PR:O74481"/>
<dbReference type="Proteomes" id="UP000002485">
    <property type="component" value="Chromosome III"/>
</dbReference>
<dbReference type="GO" id="GO:0005783">
    <property type="term" value="C:endoplasmic reticulum"/>
    <property type="evidence" value="ECO:0007005"/>
    <property type="project" value="PomBase"/>
</dbReference>
<dbReference type="GO" id="GO:0005789">
    <property type="term" value="C:endoplasmic reticulum membrane"/>
    <property type="evidence" value="ECO:0000266"/>
    <property type="project" value="PomBase"/>
</dbReference>
<dbReference type="GO" id="GO:0005794">
    <property type="term" value="C:Golgi apparatus"/>
    <property type="evidence" value="ECO:0007005"/>
    <property type="project" value="PomBase"/>
</dbReference>
<dbReference type="GO" id="GO:0000139">
    <property type="term" value="C:Golgi membrane"/>
    <property type="evidence" value="ECO:0007669"/>
    <property type="project" value="UniProtKB-SubCell"/>
</dbReference>
<dbReference type="GO" id="GO:0003756">
    <property type="term" value="F:protein disulfide isomerase activity"/>
    <property type="evidence" value="ECO:0000266"/>
    <property type="project" value="PomBase"/>
</dbReference>
<dbReference type="GO" id="GO:0036503">
    <property type="term" value="P:ERAD pathway"/>
    <property type="evidence" value="ECO:0000266"/>
    <property type="project" value="PomBase"/>
</dbReference>
<dbReference type="Gene3D" id="3.40.30.10">
    <property type="entry name" value="Glutaredoxin"/>
    <property type="match status" value="1"/>
</dbReference>
<dbReference type="InterPro" id="IPR052842">
    <property type="entry name" value="ER_Co-chaperone"/>
</dbReference>
<dbReference type="InterPro" id="IPR036249">
    <property type="entry name" value="Thioredoxin-like_sf"/>
</dbReference>
<dbReference type="PANTHER" id="PTHR45184">
    <property type="entry name" value="DNAJ PROTEIN ERDJ3A"/>
    <property type="match status" value="1"/>
</dbReference>
<dbReference type="PANTHER" id="PTHR45184:SF1">
    <property type="entry name" value="DNAJ PROTEIN ERDJ3A"/>
    <property type="match status" value="1"/>
</dbReference>
<dbReference type="SUPFAM" id="SSF52833">
    <property type="entry name" value="Thioredoxin-like"/>
    <property type="match status" value="1"/>
</dbReference>
<protein>
    <recommendedName>
        <fullName>Uncharacterized protein C1840.08c</fullName>
    </recommendedName>
</protein>
<feature type="signal peptide" evidence="1">
    <location>
        <begin position="1"/>
        <end position="24"/>
    </location>
</feature>
<feature type="chain" id="PRO_0000350970" description="Uncharacterized protein C1840.08c">
    <location>
        <begin position="25"/>
        <end position="561"/>
    </location>
</feature>
<feature type="topological domain" description="Lumenal" evidence="1">
    <location>
        <begin position="25"/>
        <end position="509"/>
    </location>
</feature>
<feature type="transmembrane region" description="Helical" evidence="1">
    <location>
        <begin position="510"/>
        <end position="530"/>
    </location>
</feature>
<feature type="topological domain" description="Cytoplasmic" evidence="1">
    <location>
        <begin position="531"/>
        <end position="561"/>
    </location>
</feature>
<comment type="subcellular location">
    <subcellularLocation>
        <location evidence="2">Endoplasmic reticulum membrane</location>
        <topology evidence="2">Single-pass membrane protein</topology>
    </subcellularLocation>
    <subcellularLocation>
        <location evidence="2">Golgi apparatus membrane</location>
        <topology evidence="2">Single-pass membrane protein</topology>
    </subcellularLocation>
</comment>
<sequence length="561" mass="64715">MELGAWRSILYIAFLFAITRHAFCKAVNLVHSPEGEEFENILSSVSATVEKKEVNNKLIMPTANRDNQGVREELLVSSFKERKLLNTNSANLRLNSIGSYEMIDFKQINSEFFLSHRQHGFVLFIDSKKKPRQSFYTDSATSIVQLSKKYRNKIKFKSVDCASSLEKCEEIGINSFPSLVYYNNAGQKKVFTAHTPYEVLSKHADLITELDETDGKVYPQSIIRLEEFKNLKANEPVFFLYLHDYGSTPEDFDSLRIFARYLVGFAPLYRTDDEKVIKTLNVTRLPHLVAIRHGVAFSYSERSVSAMRNTFQLIKWASLLKYPLVPELTPAVVENLDSDSYLAIALINPTSQVKASKAISTVQEIGLKWTLKLREVERKQLLTAREKWWDHLRMLKQKGYDDVAFLAAEYSLPLPKNKKVTFVWVNSLQWKTWISHTFHIDPMGPSRFVLMDPSRMFYWDSSAKGLPLTLDDSSLILDTTFRVLAITGEGLPHEFSIPRGYVYLSEIKQYSSLILISLWISLILFVSFLNRRLILHYSFESVHQLKTLTRKFIYSSLLKQD</sequence>
<evidence type="ECO:0000255" key="1"/>
<evidence type="ECO:0000269" key="2">
    <source>
    </source>
</evidence>
<proteinExistence type="inferred from homology"/>
<reference key="1">
    <citation type="journal article" date="2002" name="Nature">
        <title>The genome sequence of Schizosaccharomyces pombe.</title>
        <authorList>
            <person name="Wood V."/>
            <person name="Gwilliam R."/>
            <person name="Rajandream M.A."/>
            <person name="Lyne M.H."/>
            <person name="Lyne R."/>
            <person name="Stewart A."/>
            <person name="Sgouros J.G."/>
            <person name="Peat N."/>
            <person name="Hayles J."/>
            <person name="Baker S.G."/>
            <person name="Basham D."/>
            <person name="Bowman S."/>
            <person name="Brooks K."/>
            <person name="Brown D."/>
            <person name="Brown S."/>
            <person name="Chillingworth T."/>
            <person name="Churcher C.M."/>
            <person name="Collins M."/>
            <person name="Connor R."/>
            <person name="Cronin A."/>
            <person name="Davis P."/>
            <person name="Feltwell T."/>
            <person name="Fraser A."/>
            <person name="Gentles S."/>
            <person name="Goble A."/>
            <person name="Hamlin N."/>
            <person name="Harris D.E."/>
            <person name="Hidalgo J."/>
            <person name="Hodgson G."/>
            <person name="Holroyd S."/>
            <person name="Hornsby T."/>
            <person name="Howarth S."/>
            <person name="Huckle E.J."/>
            <person name="Hunt S."/>
            <person name="Jagels K."/>
            <person name="James K.D."/>
            <person name="Jones L."/>
            <person name="Jones M."/>
            <person name="Leather S."/>
            <person name="McDonald S."/>
            <person name="McLean J."/>
            <person name="Mooney P."/>
            <person name="Moule S."/>
            <person name="Mungall K.L."/>
            <person name="Murphy L.D."/>
            <person name="Niblett D."/>
            <person name="Odell C."/>
            <person name="Oliver K."/>
            <person name="O'Neil S."/>
            <person name="Pearson D."/>
            <person name="Quail M.A."/>
            <person name="Rabbinowitsch E."/>
            <person name="Rutherford K.M."/>
            <person name="Rutter S."/>
            <person name="Saunders D."/>
            <person name="Seeger K."/>
            <person name="Sharp S."/>
            <person name="Skelton J."/>
            <person name="Simmonds M.N."/>
            <person name="Squares R."/>
            <person name="Squares S."/>
            <person name="Stevens K."/>
            <person name="Taylor K."/>
            <person name="Taylor R.G."/>
            <person name="Tivey A."/>
            <person name="Walsh S.V."/>
            <person name="Warren T."/>
            <person name="Whitehead S."/>
            <person name="Woodward J.R."/>
            <person name="Volckaert G."/>
            <person name="Aert R."/>
            <person name="Robben J."/>
            <person name="Grymonprez B."/>
            <person name="Weltjens I."/>
            <person name="Vanstreels E."/>
            <person name="Rieger M."/>
            <person name="Schaefer M."/>
            <person name="Mueller-Auer S."/>
            <person name="Gabel C."/>
            <person name="Fuchs M."/>
            <person name="Duesterhoeft A."/>
            <person name="Fritzc C."/>
            <person name="Holzer E."/>
            <person name="Moestl D."/>
            <person name="Hilbert H."/>
            <person name="Borzym K."/>
            <person name="Langer I."/>
            <person name="Beck A."/>
            <person name="Lehrach H."/>
            <person name="Reinhardt R."/>
            <person name="Pohl T.M."/>
            <person name="Eger P."/>
            <person name="Zimmermann W."/>
            <person name="Wedler H."/>
            <person name="Wambutt R."/>
            <person name="Purnelle B."/>
            <person name="Goffeau A."/>
            <person name="Cadieu E."/>
            <person name="Dreano S."/>
            <person name="Gloux S."/>
            <person name="Lelaure V."/>
            <person name="Mottier S."/>
            <person name="Galibert F."/>
            <person name="Aves S.J."/>
            <person name="Xiang Z."/>
            <person name="Hunt C."/>
            <person name="Moore K."/>
            <person name="Hurst S.M."/>
            <person name="Lucas M."/>
            <person name="Rochet M."/>
            <person name="Gaillardin C."/>
            <person name="Tallada V.A."/>
            <person name="Garzon A."/>
            <person name="Thode G."/>
            <person name="Daga R.R."/>
            <person name="Cruzado L."/>
            <person name="Jimenez J."/>
            <person name="Sanchez M."/>
            <person name="del Rey F."/>
            <person name="Benito J."/>
            <person name="Dominguez A."/>
            <person name="Revuelta J.L."/>
            <person name="Moreno S."/>
            <person name="Armstrong J."/>
            <person name="Forsburg S.L."/>
            <person name="Cerutti L."/>
            <person name="Lowe T."/>
            <person name="McCombie W.R."/>
            <person name="Paulsen I."/>
            <person name="Potashkin J."/>
            <person name="Shpakovski G.V."/>
            <person name="Ussery D."/>
            <person name="Barrell B.G."/>
            <person name="Nurse P."/>
        </authorList>
    </citation>
    <scope>NUCLEOTIDE SEQUENCE [LARGE SCALE GENOMIC DNA]</scope>
    <source>
        <strain>972 / ATCC 24843</strain>
    </source>
</reference>
<reference key="2">
    <citation type="journal article" date="2006" name="Nat. Biotechnol.">
        <title>ORFeome cloning and global analysis of protein localization in the fission yeast Schizosaccharomyces pombe.</title>
        <authorList>
            <person name="Matsuyama A."/>
            <person name="Arai R."/>
            <person name="Yashiroda Y."/>
            <person name="Shirai A."/>
            <person name="Kamata A."/>
            <person name="Sekido S."/>
            <person name="Kobayashi Y."/>
            <person name="Hashimoto A."/>
            <person name="Hamamoto M."/>
            <person name="Hiraoka Y."/>
            <person name="Horinouchi S."/>
            <person name="Yoshida M."/>
        </authorList>
    </citation>
    <scope>SUBCELLULAR LOCATION [LARGE SCALE ANALYSIS]</scope>
</reference>
<organism>
    <name type="scientific">Schizosaccharomyces pombe (strain 972 / ATCC 24843)</name>
    <name type="common">Fission yeast</name>
    <dbReference type="NCBI Taxonomy" id="284812"/>
    <lineage>
        <taxon>Eukaryota</taxon>
        <taxon>Fungi</taxon>
        <taxon>Dikarya</taxon>
        <taxon>Ascomycota</taxon>
        <taxon>Taphrinomycotina</taxon>
        <taxon>Schizosaccharomycetes</taxon>
        <taxon>Schizosaccharomycetales</taxon>
        <taxon>Schizosaccharomycetaceae</taxon>
        <taxon>Schizosaccharomyces</taxon>
    </lineage>
</organism>
<name>YQJ8_SCHPO</name>
<gene>
    <name type="ORF">SPCC1840.08c</name>
</gene>
<accession>O74481</accession>